<proteinExistence type="inferred from homology"/>
<dbReference type="EC" id="6.3.5.2" evidence="1"/>
<dbReference type="EMBL" id="AE008384">
    <property type="protein sequence ID" value="AAM30966.1"/>
    <property type="molecule type" value="Genomic_DNA"/>
</dbReference>
<dbReference type="RefSeq" id="WP_011033217.1">
    <property type="nucleotide sequence ID" value="NC_003901.1"/>
</dbReference>
<dbReference type="SMR" id="Q8PXF0"/>
<dbReference type="MEROPS" id="C26.A31"/>
<dbReference type="KEGG" id="mma:MM_1270"/>
<dbReference type="PATRIC" id="fig|192952.21.peg.1477"/>
<dbReference type="eggNOG" id="arCOG00087">
    <property type="taxonomic scope" value="Archaea"/>
</dbReference>
<dbReference type="HOGENOM" id="CLU_014340_1_4_2"/>
<dbReference type="UniPathway" id="UPA00189">
    <property type="reaction ID" value="UER00296"/>
</dbReference>
<dbReference type="Proteomes" id="UP000000595">
    <property type="component" value="Chromosome"/>
</dbReference>
<dbReference type="GO" id="GO:0005829">
    <property type="term" value="C:cytosol"/>
    <property type="evidence" value="ECO:0007669"/>
    <property type="project" value="TreeGrafter"/>
</dbReference>
<dbReference type="GO" id="GO:0005524">
    <property type="term" value="F:ATP binding"/>
    <property type="evidence" value="ECO:0007669"/>
    <property type="project" value="UniProtKB-KW"/>
</dbReference>
<dbReference type="GO" id="GO:0003921">
    <property type="term" value="F:GMP synthase activity"/>
    <property type="evidence" value="ECO:0007669"/>
    <property type="project" value="TreeGrafter"/>
</dbReference>
<dbReference type="CDD" id="cd01742">
    <property type="entry name" value="GATase1_GMP_Synthase"/>
    <property type="match status" value="1"/>
</dbReference>
<dbReference type="FunFam" id="3.40.50.880:FF:000047">
    <property type="entry name" value="GMP synthase [glutamine-hydrolyzing] subunit A"/>
    <property type="match status" value="1"/>
</dbReference>
<dbReference type="Gene3D" id="3.40.50.880">
    <property type="match status" value="1"/>
</dbReference>
<dbReference type="HAMAP" id="MF_01510">
    <property type="entry name" value="GMP_synthase_A"/>
    <property type="match status" value="1"/>
</dbReference>
<dbReference type="InterPro" id="IPR029062">
    <property type="entry name" value="Class_I_gatase-like"/>
</dbReference>
<dbReference type="InterPro" id="IPR017926">
    <property type="entry name" value="GATASE"/>
</dbReference>
<dbReference type="InterPro" id="IPR004739">
    <property type="entry name" value="GMP_synth_GATase"/>
</dbReference>
<dbReference type="InterPro" id="IPR023686">
    <property type="entry name" value="GMP_synthase_A"/>
</dbReference>
<dbReference type="NCBIfam" id="TIGR00888">
    <property type="entry name" value="guaA_Nterm"/>
    <property type="match status" value="1"/>
</dbReference>
<dbReference type="NCBIfam" id="NF001975">
    <property type="entry name" value="PRK00758.1"/>
    <property type="match status" value="1"/>
</dbReference>
<dbReference type="PANTHER" id="PTHR11922:SF2">
    <property type="entry name" value="GMP SYNTHASE [GLUTAMINE-HYDROLYZING]"/>
    <property type="match status" value="1"/>
</dbReference>
<dbReference type="PANTHER" id="PTHR11922">
    <property type="entry name" value="GMP SYNTHASE-RELATED"/>
    <property type="match status" value="1"/>
</dbReference>
<dbReference type="Pfam" id="PF00117">
    <property type="entry name" value="GATase"/>
    <property type="match status" value="1"/>
</dbReference>
<dbReference type="PRINTS" id="PR00097">
    <property type="entry name" value="ANTSNTHASEII"/>
</dbReference>
<dbReference type="PRINTS" id="PR00096">
    <property type="entry name" value="GATASE"/>
</dbReference>
<dbReference type="SUPFAM" id="SSF52317">
    <property type="entry name" value="Class I glutamine amidotransferase-like"/>
    <property type="match status" value="1"/>
</dbReference>
<dbReference type="PROSITE" id="PS51273">
    <property type="entry name" value="GATASE_TYPE_1"/>
    <property type="match status" value="1"/>
</dbReference>
<sequence length="189" mass="21138">MRELKILVVNNYGQFCHLIHRTVRDLDMDTKIIPNVTPIEEILAEEPDGLILSGGPEMERAGLCFDYVREIDVPILGICLGHQAIALAYGGHVHAGKKGGYAEIEVEVLEEDDILRGLGPKTTVWASHADEVAILPDGFIHLARSDVCEIEAMRHPTKPIYGVQWHPEVSHTKKGEELLMNFFEVCDLY</sequence>
<evidence type="ECO:0000255" key="1">
    <source>
        <dbReference type="HAMAP-Rule" id="MF_01510"/>
    </source>
</evidence>
<feature type="chain" id="PRO_0000140223" description="GMP synthase [glutamine-hydrolyzing] subunit A">
    <location>
        <begin position="1"/>
        <end position="189"/>
    </location>
</feature>
<feature type="domain" description="Glutamine amidotransferase type-1" evidence="1">
    <location>
        <begin position="5"/>
        <end position="189"/>
    </location>
</feature>
<feature type="active site" description="Nucleophile" evidence="1">
    <location>
        <position position="79"/>
    </location>
</feature>
<feature type="active site" evidence="1">
    <location>
        <position position="166"/>
    </location>
</feature>
<feature type="active site" evidence="1">
    <location>
        <position position="168"/>
    </location>
</feature>
<comment type="function">
    <text evidence="1">Catalyzes the synthesis of GMP from XMP.</text>
</comment>
<comment type="catalytic activity">
    <reaction evidence="1">
        <text>XMP + L-glutamine + ATP + H2O = GMP + L-glutamate + AMP + diphosphate + 2 H(+)</text>
        <dbReference type="Rhea" id="RHEA:11680"/>
        <dbReference type="ChEBI" id="CHEBI:15377"/>
        <dbReference type="ChEBI" id="CHEBI:15378"/>
        <dbReference type="ChEBI" id="CHEBI:29985"/>
        <dbReference type="ChEBI" id="CHEBI:30616"/>
        <dbReference type="ChEBI" id="CHEBI:33019"/>
        <dbReference type="ChEBI" id="CHEBI:57464"/>
        <dbReference type="ChEBI" id="CHEBI:58115"/>
        <dbReference type="ChEBI" id="CHEBI:58359"/>
        <dbReference type="ChEBI" id="CHEBI:456215"/>
        <dbReference type="EC" id="6.3.5.2"/>
    </reaction>
</comment>
<comment type="pathway">
    <text evidence="1">Purine metabolism; GMP biosynthesis; GMP from XMP (L-Gln route): step 1/1.</text>
</comment>
<comment type="subunit">
    <text evidence="1">Heterodimer composed of a glutamine amidotransferase subunit (A) and a GMP-binding subunit (B).</text>
</comment>
<organism>
    <name type="scientific">Methanosarcina mazei (strain ATCC BAA-159 / DSM 3647 / Goe1 / Go1 / JCM 11833 / OCM 88)</name>
    <name type="common">Methanosarcina frisia</name>
    <dbReference type="NCBI Taxonomy" id="192952"/>
    <lineage>
        <taxon>Archaea</taxon>
        <taxon>Methanobacteriati</taxon>
        <taxon>Methanobacteriota</taxon>
        <taxon>Stenosarchaea group</taxon>
        <taxon>Methanomicrobia</taxon>
        <taxon>Methanosarcinales</taxon>
        <taxon>Methanosarcinaceae</taxon>
        <taxon>Methanosarcina</taxon>
    </lineage>
</organism>
<gene>
    <name evidence="1" type="primary">guaAA</name>
    <name type="ordered locus">MM_1270</name>
</gene>
<accession>Q8PXF0</accession>
<protein>
    <recommendedName>
        <fullName evidence="1">GMP synthase [glutamine-hydrolyzing] subunit A</fullName>
        <ecNumber evidence="1">6.3.5.2</ecNumber>
    </recommendedName>
    <alternativeName>
        <fullName evidence="1">Glutamine amidotransferase</fullName>
    </alternativeName>
</protein>
<keyword id="KW-0067">ATP-binding</keyword>
<keyword id="KW-0315">Glutamine amidotransferase</keyword>
<keyword id="KW-0332">GMP biosynthesis</keyword>
<keyword id="KW-0436">Ligase</keyword>
<keyword id="KW-0547">Nucleotide-binding</keyword>
<keyword id="KW-0658">Purine biosynthesis</keyword>
<reference key="1">
    <citation type="journal article" date="2002" name="J. Mol. Microbiol. Biotechnol.">
        <title>The genome of Methanosarcina mazei: evidence for lateral gene transfer between Bacteria and Archaea.</title>
        <authorList>
            <person name="Deppenmeier U."/>
            <person name="Johann A."/>
            <person name="Hartsch T."/>
            <person name="Merkl R."/>
            <person name="Schmitz R.A."/>
            <person name="Martinez-Arias R."/>
            <person name="Henne A."/>
            <person name="Wiezer A."/>
            <person name="Baeumer S."/>
            <person name="Jacobi C."/>
            <person name="Brueggemann H."/>
            <person name="Lienard T."/>
            <person name="Christmann A."/>
            <person name="Boemecke M."/>
            <person name="Steckel S."/>
            <person name="Bhattacharyya A."/>
            <person name="Lykidis A."/>
            <person name="Overbeek R."/>
            <person name="Klenk H.-P."/>
            <person name="Gunsalus R.P."/>
            <person name="Fritz H.-J."/>
            <person name="Gottschalk G."/>
        </authorList>
    </citation>
    <scope>NUCLEOTIDE SEQUENCE [LARGE SCALE GENOMIC DNA]</scope>
    <source>
        <strain>ATCC BAA-159 / DSM 3647 / Goe1 / Go1 / JCM 11833 / OCM 88</strain>
    </source>
</reference>
<name>GUAAA_METMA</name>